<reference key="1">
    <citation type="journal article" date="2001" name="Nature">
        <title>Genome sequence of enterohaemorrhagic Escherichia coli O157:H7.</title>
        <authorList>
            <person name="Perna N.T."/>
            <person name="Plunkett G. III"/>
            <person name="Burland V."/>
            <person name="Mau B."/>
            <person name="Glasner J.D."/>
            <person name="Rose D.J."/>
            <person name="Mayhew G.F."/>
            <person name="Evans P.S."/>
            <person name="Gregor J."/>
            <person name="Kirkpatrick H.A."/>
            <person name="Posfai G."/>
            <person name="Hackett J."/>
            <person name="Klink S."/>
            <person name="Boutin A."/>
            <person name="Shao Y."/>
            <person name="Miller L."/>
            <person name="Grotbeck E.J."/>
            <person name="Davis N.W."/>
            <person name="Lim A."/>
            <person name="Dimalanta E.T."/>
            <person name="Potamousis K."/>
            <person name="Apodaca J."/>
            <person name="Anantharaman T.S."/>
            <person name="Lin J."/>
            <person name="Yen G."/>
            <person name="Schwartz D.C."/>
            <person name="Welch R.A."/>
            <person name="Blattner F.R."/>
        </authorList>
    </citation>
    <scope>NUCLEOTIDE SEQUENCE [LARGE SCALE GENOMIC DNA]</scope>
    <source>
        <strain>O157:H7 / EDL933 / ATCC 700927 / EHEC</strain>
    </source>
</reference>
<reference key="2">
    <citation type="journal article" date="2001" name="DNA Res.">
        <title>Complete genome sequence of enterohemorrhagic Escherichia coli O157:H7 and genomic comparison with a laboratory strain K-12.</title>
        <authorList>
            <person name="Hayashi T."/>
            <person name="Makino K."/>
            <person name="Ohnishi M."/>
            <person name="Kurokawa K."/>
            <person name="Ishii K."/>
            <person name="Yokoyama K."/>
            <person name="Han C.-G."/>
            <person name="Ohtsubo E."/>
            <person name="Nakayama K."/>
            <person name="Murata T."/>
            <person name="Tanaka M."/>
            <person name="Tobe T."/>
            <person name="Iida T."/>
            <person name="Takami H."/>
            <person name="Honda T."/>
            <person name="Sasakawa C."/>
            <person name="Ogasawara N."/>
            <person name="Yasunaga T."/>
            <person name="Kuhara S."/>
            <person name="Shiba T."/>
            <person name="Hattori M."/>
            <person name="Shinagawa H."/>
        </authorList>
    </citation>
    <scope>NUCLEOTIDE SEQUENCE [LARGE SCALE GENOMIC DNA]</scope>
    <source>
        <strain>O157:H7 / Sakai / RIMD 0509952 / EHEC</strain>
    </source>
</reference>
<proteinExistence type="inferred from homology"/>
<evidence type="ECO:0000255" key="1">
    <source>
        <dbReference type="HAMAP-Rule" id="MF_01713"/>
    </source>
</evidence>
<name>PHNC_ECO57</name>
<feature type="chain" id="PRO_0000092707" description="Phosphonates import ATP-binding protein PhnC">
    <location>
        <begin position="1"/>
        <end position="262"/>
    </location>
</feature>
<feature type="domain" description="ABC transporter" evidence="1">
    <location>
        <begin position="5"/>
        <end position="253"/>
    </location>
</feature>
<feature type="binding site" evidence="1">
    <location>
        <begin position="37"/>
        <end position="44"/>
    </location>
    <ligand>
        <name>ATP</name>
        <dbReference type="ChEBI" id="CHEBI:30616"/>
    </ligand>
</feature>
<sequence length="262" mass="29440">MQTIICVEQLSKTFNQHQALHAVDLNIHHGEMVALLGPSGSGKSTLLRHLSGLITGDKSAGSHIELLGRTVQREGRLARDIRKSRANTGYIFQQFNLVNRLSVLENVLIGALGSTPFWRTCFSWFTREQKQRALQALTRVGMAHFAYQRVSTLSGGQQQRVAIARALMQQAKVILADEPIASLDPESARIVMDTLRDINQNDGITVVVTLHQVDYALRYCERIVALRQGHVFYDGSSQQFDNERFDHLYRSINRVEENAKAA</sequence>
<dbReference type="EC" id="7.3.2.2" evidence="1"/>
<dbReference type="EMBL" id="AE005174">
    <property type="protein sequence ID" value="AAG59305.1"/>
    <property type="molecule type" value="Genomic_DNA"/>
</dbReference>
<dbReference type="EMBL" id="BA000007">
    <property type="protein sequence ID" value="BAB38511.1"/>
    <property type="molecule type" value="Genomic_DNA"/>
</dbReference>
<dbReference type="PIR" id="E86105">
    <property type="entry name" value="E86105"/>
</dbReference>
<dbReference type="PIR" id="H91264">
    <property type="entry name" value="H91264"/>
</dbReference>
<dbReference type="RefSeq" id="NP_313115.1">
    <property type="nucleotide sequence ID" value="NC_002695.1"/>
</dbReference>
<dbReference type="RefSeq" id="WP_001193352.1">
    <property type="nucleotide sequence ID" value="NZ_VOAI01000008.1"/>
</dbReference>
<dbReference type="SMR" id="Q8XDV7"/>
<dbReference type="STRING" id="155864.Z5708"/>
<dbReference type="GeneID" id="914244"/>
<dbReference type="KEGG" id="ece:Z5708"/>
<dbReference type="KEGG" id="ecs:ECs_5088"/>
<dbReference type="PATRIC" id="fig|386585.9.peg.5318"/>
<dbReference type="eggNOG" id="COG3638">
    <property type="taxonomic scope" value="Bacteria"/>
</dbReference>
<dbReference type="HOGENOM" id="CLU_000604_1_22_6"/>
<dbReference type="OMA" id="RYCPRAV"/>
<dbReference type="Proteomes" id="UP000000558">
    <property type="component" value="Chromosome"/>
</dbReference>
<dbReference type="Proteomes" id="UP000002519">
    <property type="component" value="Chromosome"/>
</dbReference>
<dbReference type="GO" id="GO:0005886">
    <property type="term" value="C:plasma membrane"/>
    <property type="evidence" value="ECO:0007669"/>
    <property type="project" value="UniProtKB-SubCell"/>
</dbReference>
<dbReference type="GO" id="GO:0015416">
    <property type="term" value="F:ABC-type phosphonate transporter activity"/>
    <property type="evidence" value="ECO:0007669"/>
    <property type="project" value="UniProtKB-EC"/>
</dbReference>
<dbReference type="GO" id="GO:0005524">
    <property type="term" value="F:ATP binding"/>
    <property type="evidence" value="ECO:0007669"/>
    <property type="project" value="UniProtKB-KW"/>
</dbReference>
<dbReference type="GO" id="GO:0016887">
    <property type="term" value="F:ATP hydrolysis activity"/>
    <property type="evidence" value="ECO:0007669"/>
    <property type="project" value="InterPro"/>
</dbReference>
<dbReference type="CDD" id="cd03256">
    <property type="entry name" value="ABC_PhnC_transporter"/>
    <property type="match status" value="1"/>
</dbReference>
<dbReference type="Gene3D" id="3.40.50.300">
    <property type="entry name" value="P-loop containing nucleotide triphosphate hydrolases"/>
    <property type="match status" value="1"/>
</dbReference>
<dbReference type="InterPro" id="IPR003593">
    <property type="entry name" value="AAA+_ATPase"/>
</dbReference>
<dbReference type="InterPro" id="IPR003439">
    <property type="entry name" value="ABC_transporter-like_ATP-bd"/>
</dbReference>
<dbReference type="InterPro" id="IPR017871">
    <property type="entry name" value="ABC_transporter-like_CS"/>
</dbReference>
<dbReference type="InterPro" id="IPR012693">
    <property type="entry name" value="ABC_transpr_PhnC"/>
</dbReference>
<dbReference type="InterPro" id="IPR050086">
    <property type="entry name" value="MetN_ABC_transporter-like"/>
</dbReference>
<dbReference type="InterPro" id="IPR027417">
    <property type="entry name" value="P-loop_NTPase"/>
</dbReference>
<dbReference type="NCBIfam" id="TIGR02315">
    <property type="entry name" value="ABC_phnC"/>
    <property type="match status" value="1"/>
</dbReference>
<dbReference type="NCBIfam" id="NF007438">
    <property type="entry name" value="PRK09984.1"/>
    <property type="match status" value="1"/>
</dbReference>
<dbReference type="PANTHER" id="PTHR43166">
    <property type="entry name" value="AMINO ACID IMPORT ATP-BINDING PROTEIN"/>
    <property type="match status" value="1"/>
</dbReference>
<dbReference type="PANTHER" id="PTHR43166:SF6">
    <property type="entry name" value="PHOSPHONATES IMPORT ATP-BINDING PROTEIN PHNC"/>
    <property type="match status" value="1"/>
</dbReference>
<dbReference type="Pfam" id="PF00005">
    <property type="entry name" value="ABC_tran"/>
    <property type="match status" value="1"/>
</dbReference>
<dbReference type="SMART" id="SM00382">
    <property type="entry name" value="AAA"/>
    <property type="match status" value="1"/>
</dbReference>
<dbReference type="SUPFAM" id="SSF52540">
    <property type="entry name" value="P-loop containing nucleoside triphosphate hydrolases"/>
    <property type="match status" value="1"/>
</dbReference>
<dbReference type="PROSITE" id="PS00211">
    <property type="entry name" value="ABC_TRANSPORTER_1"/>
    <property type="match status" value="1"/>
</dbReference>
<dbReference type="PROSITE" id="PS50893">
    <property type="entry name" value="ABC_TRANSPORTER_2"/>
    <property type="match status" value="1"/>
</dbReference>
<dbReference type="PROSITE" id="PS51249">
    <property type="entry name" value="PHNC"/>
    <property type="match status" value="1"/>
</dbReference>
<keyword id="KW-0067">ATP-binding</keyword>
<keyword id="KW-0997">Cell inner membrane</keyword>
<keyword id="KW-1003">Cell membrane</keyword>
<keyword id="KW-0472">Membrane</keyword>
<keyword id="KW-0547">Nucleotide-binding</keyword>
<keyword id="KW-0918">Phosphonate transport</keyword>
<keyword id="KW-1185">Reference proteome</keyword>
<keyword id="KW-1278">Translocase</keyword>
<keyword id="KW-0813">Transport</keyword>
<accession>Q8XDV7</accession>
<accession>Q7A8Z0</accession>
<protein>
    <recommendedName>
        <fullName evidence="1">Phosphonates import ATP-binding protein PhnC</fullName>
        <ecNumber evidence="1">7.3.2.2</ecNumber>
    </recommendedName>
</protein>
<gene>
    <name evidence="1" type="primary">phnC</name>
    <name type="ordered locus">Z5708</name>
    <name type="ordered locus">ECs5088</name>
</gene>
<organism>
    <name type="scientific">Escherichia coli O157:H7</name>
    <dbReference type="NCBI Taxonomy" id="83334"/>
    <lineage>
        <taxon>Bacteria</taxon>
        <taxon>Pseudomonadati</taxon>
        <taxon>Pseudomonadota</taxon>
        <taxon>Gammaproteobacteria</taxon>
        <taxon>Enterobacterales</taxon>
        <taxon>Enterobacteriaceae</taxon>
        <taxon>Escherichia</taxon>
    </lineage>
</organism>
<comment type="function">
    <text evidence="1">Part of the ABC transporter complex PhnCDE involved in phosphonates import. Responsible for energy coupling to the transport system.</text>
</comment>
<comment type="catalytic activity">
    <reaction evidence="1">
        <text>phosphonate(out) + ATP + H2O = phosphonate(in) + ADP + phosphate + H(+)</text>
        <dbReference type="Rhea" id="RHEA:18065"/>
        <dbReference type="ChEBI" id="CHEBI:15377"/>
        <dbReference type="ChEBI" id="CHEBI:15378"/>
        <dbReference type="ChEBI" id="CHEBI:16215"/>
        <dbReference type="ChEBI" id="CHEBI:30616"/>
        <dbReference type="ChEBI" id="CHEBI:43474"/>
        <dbReference type="ChEBI" id="CHEBI:456216"/>
        <dbReference type="EC" id="7.3.2.2"/>
    </reaction>
</comment>
<comment type="subunit">
    <text evidence="1">The complex is composed of two ATP-binding proteins (PhnC), two transmembrane proteins (PhnE) and a solute-binding protein (PhnD).</text>
</comment>
<comment type="subcellular location">
    <subcellularLocation>
        <location evidence="1">Cell inner membrane</location>
        <topology evidence="1">Peripheral membrane protein</topology>
    </subcellularLocation>
</comment>
<comment type="similarity">
    <text evidence="1">Belongs to the ABC transporter superfamily. Phosphonates importer (TC 3.A.1.9.1) family.</text>
</comment>